<keyword id="KW-0067">ATP-binding</keyword>
<keyword id="KW-0315">Glutamine amidotransferase</keyword>
<keyword id="KW-0436">Ligase</keyword>
<keyword id="KW-0460">Magnesium</keyword>
<keyword id="KW-0479">Metal-binding</keyword>
<keyword id="KW-0547">Nucleotide-binding</keyword>
<keyword id="KW-0665">Pyrimidine biosynthesis</keyword>
<dbReference type="EC" id="6.3.4.2" evidence="1"/>
<dbReference type="EMBL" id="CP000680">
    <property type="protein sequence ID" value="ABP85789.1"/>
    <property type="molecule type" value="Genomic_DNA"/>
</dbReference>
<dbReference type="SMR" id="A4XWS3"/>
<dbReference type="STRING" id="399739.Pmen_3035"/>
<dbReference type="MEROPS" id="C26.964"/>
<dbReference type="KEGG" id="pmy:Pmen_3035"/>
<dbReference type="PATRIC" id="fig|399739.8.peg.3081"/>
<dbReference type="eggNOG" id="COG0504">
    <property type="taxonomic scope" value="Bacteria"/>
</dbReference>
<dbReference type="HOGENOM" id="CLU_011675_5_0_6"/>
<dbReference type="OrthoDB" id="9801107at2"/>
<dbReference type="UniPathway" id="UPA00159">
    <property type="reaction ID" value="UER00277"/>
</dbReference>
<dbReference type="GO" id="GO:0005829">
    <property type="term" value="C:cytosol"/>
    <property type="evidence" value="ECO:0007669"/>
    <property type="project" value="TreeGrafter"/>
</dbReference>
<dbReference type="GO" id="GO:0005524">
    <property type="term" value="F:ATP binding"/>
    <property type="evidence" value="ECO:0007669"/>
    <property type="project" value="UniProtKB-KW"/>
</dbReference>
<dbReference type="GO" id="GO:0003883">
    <property type="term" value="F:CTP synthase activity"/>
    <property type="evidence" value="ECO:0007669"/>
    <property type="project" value="UniProtKB-UniRule"/>
</dbReference>
<dbReference type="GO" id="GO:0004359">
    <property type="term" value="F:glutaminase activity"/>
    <property type="evidence" value="ECO:0007669"/>
    <property type="project" value="RHEA"/>
</dbReference>
<dbReference type="GO" id="GO:0042802">
    <property type="term" value="F:identical protein binding"/>
    <property type="evidence" value="ECO:0007669"/>
    <property type="project" value="TreeGrafter"/>
</dbReference>
<dbReference type="GO" id="GO:0046872">
    <property type="term" value="F:metal ion binding"/>
    <property type="evidence" value="ECO:0007669"/>
    <property type="project" value="UniProtKB-KW"/>
</dbReference>
<dbReference type="GO" id="GO:0044210">
    <property type="term" value="P:'de novo' CTP biosynthetic process"/>
    <property type="evidence" value="ECO:0007669"/>
    <property type="project" value="UniProtKB-UniRule"/>
</dbReference>
<dbReference type="GO" id="GO:0019856">
    <property type="term" value="P:pyrimidine nucleobase biosynthetic process"/>
    <property type="evidence" value="ECO:0007669"/>
    <property type="project" value="TreeGrafter"/>
</dbReference>
<dbReference type="CDD" id="cd03113">
    <property type="entry name" value="CTPS_N"/>
    <property type="match status" value="1"/>
</dbReference>
<dbReference type="CDD" id="cd01746">
    <property type="entry name" value="GATase1_CTP_Synthase"/>
    <property type="match status" value="1"/>
</dbReference>
<dbReference type="FunFam" id="3.40.50.300:FF:000009">
    <property type="entry name" value="CTP synthase"/>
    <property type="match status" value="1"/>
</dbReference>
<dbReference type="FunFam" id="3.40.50.880:FF:000002">
    <property type="entry name" value="CTP synthase"/>
    <property type="match status" value="1"/>
</dbReference>
<dbReference type="Gene3D" id="3.40.50.880">
    <property type="match status" value="1"/>
</dbReference>
<dbReference type="Gene3D" id="3.40.50.300">
    <property type="entry name" value="P-loop containing nucleotide triphosphate hydrolases"/>
    <property type="match status" value="1"/>
</dbReference>
<dbReference type="HAMAP" id="MF_01227">
    <property type="entry name" value="PyrG"/>
    <property type="match status" value="1"/>
</dbReference>
<dbReference type="InterPro" id="IPR029062">
    <property type="entry name" value="Class_I_gatase-like"/>
</dbReference>
<dbReference type="InterPro" id="IPR004468">
    <property type="entry name" value="CTP_synthase"/>
</dbReference>
<dbReference type="InterPro" id="IPR017456">
    <property type="entry name" value="CTP_synthase_N"/>
</dbReference>
<dbReference type="InterPro" id="IPR017926">
    <property type="entry name" value="GATASE"/>
</dbReference>
<dbReference type="InterPro" id="IPR033828">
    <property type="entry name" value="GATase1_CTP_Synthase"/>
</dbReference>
<dbReference type="InterPro" id="IPR027417">
    <property type="entry name" value="P-loop_NTPase"/>
</dbReference>
<dbReference type="NCBIfam" id="NF003792">
    <property type="entry name" value="PRK05380.1"/>
    <property type="match status" value="1"/>
</dbReference>
<dbReference type="NCBIfam" id="TIGR00337">
    <property type="entry name" value="PyrG"/>
    <property type="match status" value="1"/>
</dbReference>
<dbReference type="PANTHER" id="PTHR11550">
    <property type="entry name" value="CTP SYNTHASE"/>
    <property type="match status" value="1"/>
</dbReference>
<dbReference type="PANTHER" id="PTHR11550:SF0">
    <property type="entry name" value="CTP SYNTHASE-RELATED"/>
    <property type="match status" value="1"/>
</dbReference>
<dbReference type="Pfam" id="PF06418">
    <property type="entry name" value="CTP_synth_N"/>
    <property type="match status" value="1"/>
</dbReference>
<dbReference type="Pfam" id="PF00117">
    <property type="entry name" value="GATase"/>
    <property type="match status" value="1"/>
</dbReference>
<dbReference type="SUPFAM" id="SSF52317">
    <property type="entry name" value="Class I glutamine amidotransferase-like"/>
    <property type="match status" value="1"/>
</dbReference>
<dbReference type="SUPFAM" id="SSF52540">
    <property type="entry name" value="P-loop containing nucleoside triphosphate hydrolases"/>
    <property type="match status" value="1"/>
</dbReference>
<dbReference type="PROSITE" id="PS51273">
    <property type="entry name" value="GATASE_TYPE_1"/>
    <property type="match status" value="1"/>
</dbReference>
<sequence length="543" mass="59594">MTRYIFVTGGVVSSLGKGIASASLAAILEARGLKVTMLKLDPYINVDPGTMSPFQHGEVFVTHDGAETDLDLGHYERFIRTTMSKSNNFTTGRVYEDVLRKERRGDYLGATIQVIPHITDEIKRRIIKGAGDADVALVEIGGTVGDIESQPFLEAIRQLRVEVGAKRAMLMHLTLVPYIATAGETKTKPTQHSVKELRSIGLQPDVLVCRSDHPIDVSSRRKIALFTNVEERAVISLEDVDTIYKIPGVLHAQGLDDFVVERFGLECGGADLSEWDRVVDAKLNPEKEVTIAMVGKYMELLDAYKSLIEAMSHAGIQNRTKVNLRYIDSEDIENQGTGLLEGVDAILVPGGFGLRGVEGKIKTVQYARENKIPYLGICLGMQVAVIEYARNVVGWTDANSTEFDMASQHPVVGLITEWQDAAGSVEQRSENSDLGGTMRLGAQDCQLQAGSKVHDCYGKDVIVERHRHRYEVNNNLLPQLTEAGLKVTGRSGDGALVEVVEAPDHPWFVACQFHPEFTSTPRDGHPLFSGFVNAALAQKAKKV</sequence>
<proteinExistence type="inferred from homology"/>
<protein>
    <recommendedName>
        <fullName evidence="1">CTP synthase</fullName>
        <ecNumber evidence="1">6.3.4.2</ecNumber>
    </recommendedName>
    <alternativeName>
        <fullName evidence="1">Cytidine 5'-triphosphate synthase</fullName>
    </alternativeName>
    <alternativeName>
        <fullName evidence="1">Cytidine triphosphate synthetase</fullName>
        <shortName evidence="1">CTP synthetase</shortName>
        <shortName evidence="1">CTPS</shortName>
    </alternativeName>
    <alternativeName>
        <fullName evidence="1">UTP--ammonia ligase</fullName>
    </alternativeName>
</protein>
<accession>A4XWS3</accession>
<reference key="1">
    <citation type="submission" date="2007-04" db="EMBL/GenBank/DDBJ databases">
        <title>Complete sequence of Pseudomonas mendocina ymp.</title>
        <authorList>
            <consortium name="US DOE Joint Genome Institute"/>
            <person name="Copeland A."/>
            <person name="Lucas S."/>
            <person name="Lapidus A."/>
            <person name="Barry K."/>
            <person name="Glavina del Rio T."/>
            <person name="Dalin E."/>
            <person name="Tice H."/>
            <person name="Pitluck S."/>
            <person name="Kiss H."/>
            <person name="Brettin T."/>
            <person name="Detter J.C."/>
            <person name="Bruce D."/>
            <person name="Han C."/>
            <person name="Schmutz J."/>
            <person name="Larimer F."/>
            <person name="Land M."/>
            <person name="Hauser L."/>
            <person name="Kyrpides N."/>
            <person name="Mikhailova N."/>
            <person name="Hersman L."/>
            <person name="Dubois J."/>
            <person name="Maurice P."/>
            <person name="Richardson P."/>
        </authorList>
    </citation>
    <scope>NUCLEOTIDE SEQUENCE [LARGE SCALE GENOMIC DNA]</scope>
    <source>
        <strain>ymp</strain>
    </source>
</reference>
<organism>
    <name type="scientific">Ectopseudomonas mendocina (strain ymp)</name>
    <name type="common">Pseudomonas mendocina</name>
    <dbReference type="NCBI Taxonomy" id="399739"/>
    <lineage>
        <taxon>Bacteria</taxon>
        <taxon>Pseudomonadati</taxon>
        <taxon>Pseudomonadota</taxon>
        <taxon>Gammaproteobacteria</taxon>
        <taxon>Pseudomonadales</taxon>
        <taxon>Pseudomonadaceae</taxon>
        <taxon>Ectopseudomonas</taxon>
    </lineage>
</organism>
<evidence type="ECO:0000255" key="1">
    <source>
        <dbReference type="HAMAP-Rule" id="MF_01227"/>
    </source>
</evidence>
<gene>
    <name evidence="1" type="primary">pyrG</name>
    <name type="ordered locus">Pmen_3035</name>
</gene>
<name>PYRG_ECTM1</name>
<comment type="function">
    <text evidence="1">Catalyzes the ATP-dependent amination of UTP to CTP with either L-glutamine or ammonia as the source of nitrogen. Regulates intracellular CTP levels through interactions with the four ribonucleotide triphosphates.</text>
</comment>
<comment type="catalytic activity">
    <reaction evidence="1">
        <text>UTP + L-glutamine + ATP + H2O = CTP + L-glutamate + ADP + phosphate + 2 H(+)</text>
        <dbReference type="Rhea" id="RHEA:26426"/>
        <dbReference type="ChEBI" id="CHEBI:15377"/>
        <dbReference type="ChEBI" id="CHEBI:15378"/>
        <dbReference type="ChEBI" id="CHEBI:29985"/>
        <dbReference type="ChEBI" id="CHEBI:30616"/>
        <dbReference type="ChEBI" id="CHEBI:37563"/>
        <dbReference type="ChEBI" id="CHEBI:43474"/>
        <dbReference type="ChEBI" id="CHEBI:46398"/>
        <dbReference type="ChEBI" id="CHEBI:58359"/>
        <dbReference type="ChEBI" id="CHEBI:456216"/>
        <dbReference type="EC" id="6.3.4.2"/>
    </reaction>
</comment>
<comment type="catalytic activity">
    <reaction evidence="1">
        <text>L-glutamine + H2O = L-glutamate + NH4(+)</text>
        <dbReference type="Rhea" id="RHEA:15889"/>
        <dbReference type="ChEBI" id="CHEBI:15377"/>
        <dbReference type="ChEBI" id="CHEBI:28938"/>
        <dbReference type="ChEBI" id="CHEBI:29985"/>
        <dbReference type="ChEBI" id="CHEBI:58359"/>
    </reaction>
</comment>
<comment type="catalytic activity">
    <reaction evidence="1">
        <text>UTP + NH4(+) + ATP = CTP + ADP + phosphate + 2 H(+)</text>
        <dbReference type="Rhea" id="RHEA:16597"/>
        <dbReference type="ChEBI" id="CHEBI:15378"/>
        <dbReference type="ChEBI" id="CHEBI:28938"/>
        <dbReference type="ChEBI" id="CHEBI:30616"/>
        <dbReference type="ChEBI" id="CHEBI:37563"/>
        <dbReference type="ChEBI" id="CHEBI:43474"/>
        <dbReference type="ChEBI" id="CHEBI:46398"/>
        <dbReference type="ChEBI" id="CHEBI:456216"/>
    </reaction>
</comment>
<comment type="activity regulation">
    <text evidence="1">Allosterically activated by GTP, when glutamine is the substrate; GTP has no effect on the reaction when ammonia is the substrate. The allosteric effector GTP functions by stabilizing the protein conformation that binds the tetrahedral intermediate(s) formed during glutamine hydrolysis. Inhibited by the product CTP, via allosteric rather than competitive inhibition.</text>
</comment>
<comment type="pathway">
    <text evidence="1">Pyrimidine metabolism; CTP biosynthesis via de novo pathway; CTP from UDP: step 2/2.</text>
</comment>
<comment type="subunit">
    <text evidence="1">Homotetramer.</text>
</comment>
<comment type="miscellaneous">
    <text evidence="1">CTPSs have evolved a hybrid strategy for distinguishing between UTP and CTP. The overlapping regions of the product feedback inhibitory and substrate sites recognize a common feature in both compounds, the triphosphate moiety. To differentiate isosteric substrate and product pyrimidine rings, an additional pocket far from the expected kinase/ligase catalytic site, specifically recognizes the cytosine and ribose portions of the product inhibitor.</text>
</comment>
<comment type="similarity">
    <text evidence="1">Belongs to the CTP synthase family.</text>
</comment>
<feature type="chain" id="PRO_1000139534" description="CTP synthase">
    <location>
        <begin position="1"/>
        <end position="543"/>
    </location>
</feature>
<feature type="domain" description="Glutamine amidotransferase type-1" evidence="1">
    <location>
        <begin position="290"/>
        <end position="541"/>
    </location>
</feature>
<feature type="region of interest" description="Amidoligase domain" evidence="1">
    <location>
        <begin position="1"/>
        <end position="265"/>
    </location>
</feature>
<feature type="active site" description="Nucleophile; for glutamine hydrolysis" evidence="1">
    <location>
        <position position="378"/>
    </location>
</feature>
<feature type="active site" evidence="1">
    <location>
        <position position="514"/>
    </location>
</feature>
<feature type="active site" evidence="1">
    <location>
        <position position="516"/>
    </location>
</feature>
<feature type="binding site" evidence="1">
    <location>
        <position position="13"/>
    </location>
    <ligand>
        <name>CTP</name>
        <dbReference type="ChEBI" id="CHEBI:37563"/>
        <note>allosteric inhibitor</note>
    </ligand>
</feature>
<feature type="binding site" evidence="1">
    <location>
        <position position="13"/>
    </location>
    <ligand>
        <name>UTP</name>
        <dbReference type="ChEBI" id="CHEBI:46398"/>
    </ligand>
</feature>
<feature type="binding site" evidence="1">
    <location>
        <begin position="14"/>
        <end position="19"/>
    </location>
    <ligand>
        <name>ATP</name>
        <dbReference type="ChEBI" id="CHEBI:30616"/>
    </ligand>
</feature>
<feature type="binding site" evidence="1">
    <location>
        <position position="71"/>
    </location>
    <ligand>
        <name>ATP</name>
        <dbReference type="ChEBI" id="CHEBI:30616"/>
    </ligand>
</feature>
<feature type="binding site" evidence="1">
    <location>
        <position position="71"/>
    </location>
    <ligand>
        <name>Mg(2+)</name>
        <dbReference type="ChEBI" id="CHEBI:18420"/>
    </ligand>
</feature>
<feature type="binding site" evidence="1">
    <location>
        <position position="139"/>
    </location>
    <ligand>
        <name>Mg(2+)</name>
        <dbReference type="ChEBI" id="CHEBI:18420"/>
    </ligand>
</feature>
<feature type="binding site" evidence="1">
    <location>
        <begin position="146"/>
        <end position="148"/>
    </location>
    <ligand>
        <name>CTP</name>
        <dbReference type="ChEBI" id="CHEBI:37563"/>
        <note>allosteric inhibitor</note>
    </ligand>
</feature>
<feature type="binding site" evidence="1">
    <location>
        <begin position="186"/>
        <end position="191"/>
    </location>
    <ligand>
        <name>CTP</name>
        <dbReference type="ChEBI" id="CHEBI:37563"/>
        <note>allosteric inhibitor</note>
    </ligand>
</feature>
<feature type="binding site" evidence="1">
    <location>
        <begin position="186"/>
        <end position="191"/>
    </location>
    <ligand>
        <name>UTP</name>
        <dbReference type="ChEBI" id="CHEBI:46398"/>
    </ligand>
</feature>
<feature type="binding site" evidence="1">
    <location>
        <position position="222"/>
    </location>
    <ligand>
        <name>CTP</name>
        <dbReference type="ChEBI" id="CHEBI:37563"/>
        <note>allosteric inhibitor</note>
    </ligand>
</feature>
<feature type="binding site" evidence="1">
    <location>
        <position position="222"/>
    </location>
    <ligand>
        <name>UTP</name>
        <dbReference type="ChEBI" id="CHEBI:46398"/>
    </ligand>
</feature>
<feature type="binding site" evidence="1">
    <location>
        <position position="351"/>
    </location>
    <ligand>
        <name>L-glutamine</name>
        <dbReference type="ChEBI" id="CHEBI:58359"/>
    </ligand>
</feature>
<feature type="binding site" evidence="1">
    <location>
        <begin position="379"/>
        <end position="382"/>
    </location>
    <ligand>
        <name>L-glutamine</name>
        <dbReference type="ChEBI" id="CHEBI:58359"/>
    </ligand>
</feature>
<feature type="binding site" evidence="1">
    <location>
        <position position="402"/>
    </location>
    <ligand>
        <name>L-glutamine</name>
        <dbReference type="ChEBI" id="CHEBI:58359"/>
    </ligand>
</feature>
<feature type="binding site" evidence="1">
    <location>
        <position position="469"/>
    </location>
    <ligand>
        <name>L-glutamine</name>
        <dbReference type="ChEBI" id="CHEBI:58359"/>
    </ligand>
</feature>